<accession>A6LEH9</accession>
<reference key="1">
    <citation type="journal article" date="2007" name="PLoS Biol.">
        <title>Evolution of symbiotic bacteria in the distal human intestine.</title>
        <authorList>
            <person name="Xu J."/>
            <person name="Mahowald M.A."/>
            <person name="Ley R.E."/>
            <person name="Lozupone C.A."/>
            <person name="Hamady M."/>
            <person name="Martens E.C."/>
            <person name="Henrissat B."/>
            <person name="Coutinho P.M."/>
            <person name="Minx P."/>
            <person name="Latreille P."/>
            <person name="Cordum H."/>
            <person name="Van Brunt A."/>
            <person name="Kim K."/>
            <person name="Fulton R.S."/>
            <person name="Fulton L.A."/>
            <person name="Clifton S.W."/>
            <person name="Wilson R.K."/>
            <person name="Knight R.D."/>
            <person name="Gordon J.I."/>
        </authorList>
    </citation>
    <scope>NUCLEOTIDE SEQUENCE [LARGE SCALE GENOMIC DNA]</scope>
    <source>
        <strain>ATCC 8503 / DSM 20701 / CIP 104284 / JCM 5825 / NCTC 11152</strain>
    </source>
</reference>
<comment type="function">
    <text evidence="1">This is one of the proteins that bind and probably mediate the attachment of the 5S RNA into the large ribosomal subunit, where it forms part of the central protuberance. In the 70S ribosome it contacts protein S13 of the 30S subunit (bridge B1b), connecting the 2 subunits; this bridge is implicated in subunit movement. Contacts the P site tRNA; the 5S rRNA and some of its associated proteins might help stabilize positioning of ribosome-bound tRNAs.</text>
</comment>
<comment type="subunit">
    <text evidence="1">Part of the 50S ribosomal subunit; part of the 5S rRNA/L5/L18/L25 subcomplex. Contacts the 5S rRNA and the P site tRNA. Forms a bridge to the 30S subunit in the 70S ribosome.</text>
</comment>
<comment type="similarity">
    <text evidence="1">Belongs to the universal ribosomal protein uL5 family.</text>
</comment>
<sequence>MSNTASLKKEYQDRIVPALTKEFGYKSVMQVPVLKKIVINQGLGMATADKKIIDIAISELSTITGQKAVATVSKKDISNFKLRKKMPIGVMVTLRREQMYEFLERLVRVALPRIRDFKGIESKLDGRGNYTLGIQEQIIFPEINIDNITKILGMNITFVTSAKTDEEGYALLREFGLPFKNGKKD</sequence>
<proteinExistence type="inferred from homology"/>
<organism>
    <name type="scientific">Parabacteroides distasonis (strain ATCC 8503 / DSM 20701 / CIP 104284 / JCM 5825 / NCTC 11152)</name>
    <dbReference type="NCBI Taxonomy" id="435591"/>
    <lineage>
        <taxon>Bacteria</taxon>
        <taxon>Pseudomonadati</taxon>
        <taxon>Bacteroidota</taxon>
        <taxon>Bacteroidia</taxon>
        <taxon>Bacteroidales</taxon>
        <taxon>Tannerellaceae</taxon>
        <taxon>Parabacteroides</taxon>
    </lineage>
</organism>
<evidence type="ECO:0000255" key="1">
    <source>
        <dbReference type="HAMAP-Rule" id="MF_01333"/>
    </source>
</evidence>
<evidence type="ECO:0000305" key="2"/>
<dbReference type="EMBL" id="CP000140">
    <property type="protein sequence ID" value="ABR44093.1"/>
    <property type="molecule type" value="Genomic_DNA"/>
</dbReference>
<dbReference type="RefSeq" id="WP_005853986.1">
    <property type="nucleotide sequence ID" value="NZ_LR215978.1"/>
</dbReference>
<dbReference type="SMR" id="A6LEH9"/>
<dbReference type="STRING" id="435591.BDI_2368"/>
<dbReference type="PaxDb" id="435591-BDI_2368"/>
<dbReference type="GeneID" id="93522361"/>
<dbReference type="KEGG" id="pdi:BDI_2368"/>
<dbReference type="eggNOG" id="COG0094">
    <property type="taxonomic scope" value="Bacteria"/>
</dbReference>
<dbReference type="HOGENOM" id="CLU_061015_2_1_10"/>
<dbReference type="BioCyc" id="PDIS435591:G1G5A-2433-MONOMER"/>
<dbReference type="Proteomes" id="UP000000566">
    <property type="component" value="Chromosome"/>
</dbReference>
<dbReference type="GO" id="GO:1990904">
    <property type="term" value="C:ribonucleoprotein complex"/>
    <property type="evidence" value="ECO:0007669"/>
    <property type="project" value="UniProtKB-KW"/>
</dbReference>
<dbReference type="GO" id="GO:0005840">
    <property type="term" value="C:ribosome"/>
    <property type="evidence" value="ECO:0007669"/>
    <property type="project" value="UniProtKB-KW"/>
</dbReference>
<dbReference type="GO" id="GO:0019843">
    <property type="term" value="F:rRNA binding"/>
    <property type="evidence" value="ECO:0007669"/>
    <property type="project" value="UniProtKB-UniRule"/>
</dbReference>
<dbReference type="GO" id="GO:0003735">
    <property type="term" value="F:structural constituent of ribosome"/>
    <property type="evidence" value="ECO:0007669"/>
    <property type="project" value="InterPro"/>
</dbReference>
<dbReference type="GO" id="GO:0000049">
    <property type="term" value="F:tRNA binding"/>
    <property type="evidence" value="ECO:0007669"/>
    <property type="project" value="UniProtKB-UniRule"/>
</dbReference>
<dbReference type="GO" id="GO:0006412">
    <property type="term" value="P:translation"/>
    <property type="evidence" value="ECO:0007669"/>
    <property type="project" value="UniProtKB-UniRule"/>
</dbReference>
<dbReference type="FunFam" id="3.30.1440.10:FF:000001">
    <property type="entry name" value="50S ribosomal protein L5"/>
    <property type="match status" value="1"/>
</dbReference>
<dbReference type="Gene3D" id="3.30.1440.10">
    <property type="match status" value="1"/>
</dbReference>
<dbReference type="HAMAP" id="MF_01333_B">
    <property type="entry name" value="Ribosomal_uL5_B"/>
    <property type="match status" value="1"/>
</dbReference>
<dbReference type="InterPro" id="IPR002132">
    <property type="entry name" value="Ribosomal_uL5"/>
</dbReference>
<dbReference type="InterPro" id="IPR020930">
    <property type="entry name" value="Ribosomal_uL5_bac-type"/>
</dbReference>
<dbReference type="InterPro" id="IPR031309">
    <property type="entry name" value="Ribosomal_uL5_C"/>
</dbReference>
<dbReference type="InterPro" id="IPR022803">
    <property type="entry name" value="Ribosomal_uL5_dom_sf"/>
</dbReference>
<dbReference type="InterPro" id="IPR031310">
    <property type="entry name" value="Ribosomal_uL5_N"/>
</dbReference>
<dbReference type="NCBIfam" id="NF000585">
    <property type="entry name" value="PRK00010.1"/>
    <property type="match status" value="1"/>
</dbReference>
<dbReference type="PANTHER" id="PTHR11994">
    <property type="entry name" value="60S RIBOSOMAL PROTEIN L11-RELATED"/>
    <property type="match status" value="1"/>
</dbReference>
<dbReference type="Pfam" id="PF00281">
    <property type="entry name" value="Ribosomal_L5"/>
    <property type="match status" value="1"/>
</dbReference>
<dbReference type="Pfam" id="PF00673">
    <property type="entry name" value="Ribosomal_L5_C"/>
    <property type="match status" value="1"/>
</dbReference>
<dbReference type="PIRSF" id="PIRSF002161">
    <property type="entry name" value="Ribosomal_L5"/>
    <property type="match status" value="1"/>
</dbReference>
<dbReference type="SUPFAM" id="SSF55282">
    <property type="entry name" value="RL5-like"/>
    <property type="match status" value="1"/>
</dbReference>
<feature type="chain" id="PRO_1000052787" description="Large ribosomal subunit protein uL5">
    <location>
        <begin position="1"/>
        <end position="185"/>
    </location>
</feature>
<keyword id="KW-1185">Reference proteome</keyword>
<keyword id="KW-0687">Ribonucleoprotein</keyword>
<keyword id="KW-0689">Ribosomal protein</keyword>
<keyword id="KW-0694">RNA-binding</keyword>
<keyword id="KW-0699">rRNA-binding</keyword>
<keyword id="KW-0820">tRNA-binding</keyword>
<gene>
    <name evidence="1" type="primary">rplE</name>
    <name type="ordered locus">BDI_2368</name>
</gene>
<protein>
    <recommendedName>
        <fullName evidence="1">Large ribosomal subunit protein uL5</fullName>
    </recommendedName>
    <alternativeName>
        <fullName evidence="2">50S ribosomal protein L5</fullName>
    </alternativeName>
</protein>
<name>RL5_PARD8</name>